<dbReference type="EMBL" id="AE017143">
    <property type="protein sequence ID" value="AAP96649.1"/>
    <property type="molecule type" value="Genomic_DNA"/>
</dbReference>
<dbReference type="RefSeq" id="WP_010945676.1">
    <property type="nucleotide sequence ID" value="NC_002940.2"/>
</dbReference>
<dbReference type="SMR" id="Q7VKH9"/>
<dbReference type="STRING" id="233412.HD_1927"/>
<dbReference type="KEGG" id="hdu:HD_1927"/>
<dbReference type="eggNOG" id="COG0254">
    <property type="taxonomic scope" value="Bacteria"/>
</dbReference>
<dbReference type="HOGENOM" id="CLU_114306_2_1_6"/>
<dbReference type="OrthoDB" id="9803251at2"/>
<dbReference type="Proteomes" id="UP000001022">
    <property type="component" value="Chromosome"/>
</dbReference>
<dbReference type="GO" id="GO:1990904">
    <property type="term" value="C:ribonucleoprotein complex"/>
    <property type="evidence" value="ECO:0007669"/>
    <property type="project" value="UniProtKB-KW"/>
</dbReference>
<dbReference type="GO" id="GO:0005840">
    <property type="term" value="C:ribosome"/>
    <property type="evidence" value="ECO:0007669"/>
    <property type="project" value="UniProtKB-KW"/>
</dbReference>
<dbReference type="GO" id="GO:0003735">
    <property type="term" value="F:structural constituent of ribosome"/>
    <property type="evidence" value="ECO:0007669"/>
    <property type="project" value="InterPro"/>
</dbReference>
<dbReference type="GO" id="GO:0006412">
    <property type="term" value="P:translation"/>
    <property type="evidence" value="ECO:0007669"/>
    <property type="project" value="UniProtKB-UniRule"/>
</dbReference>
<dbReference type="Gene3D" id="4.10.830.30">
    <property type="entry name" value="Ribosomal protein L31"/>
    <property type="match status" value="1"/>
</dbReference>
<dbReference type="HAMAP" id="MF_00502">
    <property type="entry name" value="Ribosomal_bL31_2"/>
    <property type="match status" value="1"/>
</dbReference>
<dbReference type="InterPro" id="IPR034704">
    <property type="entry name" value="Ribosomal_bL28/bL31-like_sf"/>
</dbReference>
<dbReference type="InterPro" id="IPR002150">
    <property type="entry name" value="Ribosomal_bL31"/>
</dbReference>
<dbReference type="InterPro" id="IPR027493">
    <property type="entry name" value="Ribosomal_bL31_B"/>
</dbReference>
<dbReference type="InterPro" id="IPR042105">
    <property type="entry name" value="Ribosomal_bL31_sf"/>
</dbReference>
<dbReference type="NCBIfam" id="TIGR00105">
    <property type="entry name" value="L31"/>
    <property type="match status" value="1"/>
</dbReference>
<dbReference type="NCBIfam" id="NF002462">
    <property type="entry name" value="PRK01678.1"/>
    <property type="match status" value="1"/>
</dbReference>
<dbReference type="PANTHER" id="PTHR33280">
    <property type="entry name" value="50S RIBOSOMAL PROTEIN L31, CHLOROPLASTIC"/>
    <property type="match status" value="1"/>
</dbReference>
<dbReference type="PANTHER" id="PTHR33280:SF1">
    <property type="entry name" value="LARGE RIBOSOMAL SUBUNIT PROTEIN BL31C"/>
    <property type="match status" value="1"/>
</dbReference>
<dbReference type="Pfam" id="PF01197">
    <property type="entry name" value="Ribosomal_L31"/>
    <property type="match status" value="1"/>
</dbReference>
<dbReference type="PRINTS" id="PR01249">
    <property type="entry name" value="RIBOSOMALL31"/>
</dbReference>
<dbReference type="SUPFAM" id="SSF143800">
    <property type="entry name" value="L28p-like"/>
    <property type="match status" value="1"/>
</dbReference>
<dbReference type="PROSITE" id="PS01143">
    <property type="entry name" value="RIBOSOMAL_L31"/>
    <property type="match status" value="1"/>
</dbReference>
<reference key="1">
    <citation type="submission" date="2003-06" db="EMBL/GenBank/DDBJ databases">
        <title>The complete genome sequence of Haemophilus ducreyi.</title>
        <authorList>
            <person name="Munson R.S. Jr."/>
            <person name="Ray W.C."/>
            <person name="Mahairas G."/>
            <person name="Sabo P."/>
            <person name="Mungur R."/>
            <person name="Johnson L."/>
            <person name="Nguyen D."/>
            <person name="Wang J."/>
            <person name="Forst C."/>
            <person name="Hood L."/>
        </authorList>
    </citation>
    <scope>NUCLEOTIDE SEQUENCE [LARGE SCALE GENOMIC DNA]</scope>
    <source>
        <strain>35000HP / ATCC 700724</strain>
    </source>
</reference>
<gene>
    <name evidence="1" type="primary">rpmE2</name>
    <name type="ordered locus">HD_1927</name>
</gene>
<sequence>MKKGIHPENYREVLFYDASAQMGWVIRSCVATNKSMMWEDGKEYPFYPLDTSSASHPVYTGKRREANTEGRASKFNERFKGMASLAAKK</sequence>
<protein>
    <recommendedName>
        <fullName evidence="1">Large ribosomal subunit protein bL31B</fullName>
    </recommendedName>
    <alternativeName>
        <fullName evidence="2">50S ribosomal protein L31 type B</fullName>
    </alternativeName>
</protein>
<proteinExistence type="inferred from homology"/>
<name>RL31B_HAEDU</name>
<keyword id="KW-1185">Reference proteome</keyword>
<keyword id="KW-0687">Ribonucleoprotein</keyword>
<keyword id="KW-0689">Ribosomal protein</keyword>
<evidence type="ECO:0000255" key="1">
    <source>
        <dbReference type="HAMAP-Rule" id="MF_00502"/>
    </source>
</evidence>
<evidence type="ECO:0000305" key="2"/>
<organism>
    <name type="scientific">Haemophilus ducreyi (strain 35000HP / ATCC 700724)</name>
    <dbReference type="NCBI Taxonomy" id="233412"/>
    <lineage>
        <taxon>Bacteria</taxon>
        <taxon>Pseudomonadati</taxon>
        <taxon>Pseudomonadota</taxon>
        <taxon>Gammaproteobacteria</taxon>
        <taxon>Pasteurellales</taxon>
        <taxon>Pasteurellaceae</taxon>
        <taxon>Haemophilus</taxon>
    </lineage>
</organism>
<feature type="chain" id="PRO_0000173228" description="Large ribosomal subunit protein bL31B">
    <location>
        <begin position="1"/>
        <end position="89"/>
    </location>
</feature>
<accession>Q7VKH9</accession>
<comment type="subunit">
    <text evidence="1">Part of the 50S ribosomal subunit.</text>
</comment>
<comment type="similarity">
    <text evidence="1">Belongs to the bacterial ribosomal protein bL31 family. Type B subfamily.</text>
</comment>